<feature type="chain" id="PRO_0000285030" description="40S small subunit processome assembly factor 1">
    <location>
        <begin position="1"/>
        <end position="281"/>
    </location>
</feature>
<feature type="region of interest" description="Disordered" evidence="2">
    <location>
        <begin position="29"/>
        <end position="141"/>
    </location>
</feature>
<feature type="region of interest" description="Disordered" evidence="2">
    <location>
        <begin position="221"/>
        <end position="254"/>
    </location>
</feature>
<feature type="modified residue" description="Phosphoserine" evidence="4">
    <location>
        <position position="67"/>
    </location>
</feature>
<feature type="modified residue" description="Phosphoserine" evidence="1">
    <location>
        <position position="75"/>
    </location>
</feature>
<feature type="modified residue" description="N6-acetyllysine" evidence="1">
    <location>
        <position position="172"/>
    </location>
</feature>
<feature type="modified residue" description="Phosphoserine" evidence="1">
    <location>
        <position position="267"/>
    </location>
</feature>
<feature type="sequence conflict" description="In Ref. 1; BAB28401." evidence="3" ref="1">
    <original>H</original>
    <variation>T</variation>
    <location>
        <position position="5"/>
    </location>
</feature>
<feature type="sequence conflict" description="In Ref. 1; BAE25604." evidence="3" ref="1">
    <original>E</original>
    <variation>G</variation>
    <location>
        <position position="119"/>
    </location>
</feature>
<feature type="sequence conflict" description="In Ref. 1; BAB28401." evidence="3" ref="1">
    <original>R</original>
    <variation>Q</variation>
    <location>
        <position position="182"/>
    </location>
</feature>
<feature type="sequence conflict" description="In Ref. 1; BAB28401." evidence="3" ref="1">
    <original>G</original>
    <variation>V</variation>
    <location>
        <position position="251"/>
    </location>
</feature>
<organism>
    <name type="scientific">Mus musculus</name>
    <name type="common">Mouse</name>
    <dbReference type="NCBI Taxonomy" id="10090"/>
    <lineage>
        <taxon>Eukaryota</taxon>
        <taxon>Metazoa</taxon>
        <taxon>Chordata</taxon>
        <taxon>Craniata</taxon>
        <taxon>Vertebrata</taxon>
        <taxon>Euteleostomi</taxon>
        <taxon>Mammalia</taxon>
        <taxon>Eutheria</taxon>
        <taxon>Euarchontoglires</taxon>
        <taxon>Glires</taxon>
        <taxon>Rodentia</taxon>
        <taxon>Myomorpha</taxon>
        <taxon>Muroidea</taxon>
        <taxon>Muridae</taxon>
        <taxon>Murinae</taxon>
        <taxon>Mus</taxon>
        <taxon>Mus</taxon>
    </lineage>
</organism>
<accession>Q8CIL4</accession>
<accession>Q3UNZ3</accession>
<accession>Q9CZF4</accession>
<evidence type="ECO:0000250" key="1">
    <source>
        <dbReference type="UniProtKB" id="Q8NDD1"/>
    </source>
</evidence>
<evidence type="ECO:0000256" key="2">
    <source>
        <dbReference type="SAM" id="MobiDB-lite"/>
    </source>
</evidence>
<evidence type="ECO:0000305" key="3"/>
<evidence type="ECO:0007744" key="4">
    <source>
    </source>
</evidence>
<keyword id="KW-0007">Acetylation</keyword>
<keyword id="KW-0158">Chromosome</keyword>
<keyword id="KW-0539">Nucleus</keyword>
<keyword id="KW-0597">Phosphoprotein</keyword>
<keyword id="KW-1185">Reference proteome</keyword>
<proteinExistence type="evidence at protein level"/>
<name>FSAF1_MOUSE</name>
<dbReference type="EMBL" id="AK012675">
    <property type="protein sequence ID" value="BAB28401.1"/>
    <property type="molecule type" value="mRNA"/>
</dbReference>
<dbReference type="EMBL" id="AK143919">
    <property type="protein sequence ID" value="BAE25604.1"/>
    <property type="molecule type" value="mRNA"/>
</dbReference>
<dbReference type="EMBL" id="BC023675">
    <property type="protein sequence ID" value="AAH23675.1"/>
    <property type="molecule type" value="mRNA"/>
</dbReference>
<dbReference type="CCDS" id="CCDS22775.1"/>
<dbReference type="RefSeq" id="NP_079891.2">
    <property type="nucleotide sequence ID" value="NM_025615.2"/>
</dbReference>
<dbReference type="SMR" id="Q8CIL4"/>
<dbReference type="BioGRID" id="211534">
    <property type="interactions" value="2"/>
</dbReference>
<dbReference type="FunCoup" id="Q8CIL4">
    <property type="interactions" value="1311"/>
</dbReference>
<dbReference type="IntAct" id="Q8CIL4">
    <property type="interactions" value="1"/>
</dbReference>
<dbReference type="MINT" id="Q8CIL4"/>
<dbReference type="STRING" id="10090.ENSMUSP00000034465"/>
<dbReference type="GlyGen" id="Q8CIL4">
    <property type="glycosylation" value="1 site, 1 N-linked glycan (1 site)"/>
</dbReference>
<dbReference type="iPTMnet" id="Q8CIL4"/>
<dbReference type="PhosphoSitePlus" id="Q8CIL4"/>
<dbReference type="jPOST" id="Q8CIL4"/>
<dbReference type="PaxDb" id="10090-ENSMUSP00000034465"/>
<dbReference type="PeptideAtlas" id="Q8CIL4"/>
<dbReference type="Pumba" id="Q8CIL4"/>
<dbReference type="Antibodypedia" id="34684">
    <property type="antibodies" value="62 antibodies from 14 providers"/>
</dbReference>
<dbReference type="Ensembl" id="ENSMUST00000034465.9">
    <property type="protein sequence ID" value="ENSMUSP00000034465.8"/>
    <property type="gene ID" value="ENSMUSG00000031984.9"/>
</dbReference>
<dbReference type="GeneID" id="66523"/>
<dbReference type="KEGG" id="mmu:66523"/>
<dbReference type="UCSC" id="uc009nxs.2">
    <property type="organism name" value="mouse"/>
</dbReference>
<dbReference type="AGR" id="MGI:1913773"/>
<dbReference type="CTD" id="128061"/>
<dbReference type="MGI" id="MGI:1913773">
    <property type="gene designation" value="2810004N23Rik"/>
</dbReference>
<dbReference type="VEuPathDB" id="HostDB:ENSMUSG00000031984"/>
<dbReference type="eggNOG" id="ENOG502S2E3">
    <property type="taxonomic scope" value="Eukaryota"/>
</dbReference>
<dbReference type="GeneTree" id="ENSGT00390000017022"/>
<dbReference type="HOGENOM" id="CLU_081604_0_0_1"/>
<dbReference type="InParanoid" id="Q8CIL4"/>
<dbReference type="OMA" id="EVVQFHS"/>
<dbReference type="OrthoDB" id="10067479at2759"/>
<dbReference type="PhylomeDB" id="Q8CIL4"/>
<dbReference type="TreeFam" id="TF328381"/>
<dbReference type="BioGRID-ORCS" id="66523">
    <property type="hits" value="23 hits in 80 CRISPR screens"/>
</dbReference>
<dbReference type="PRO" id="PR:Q8CIL4"/>
<dbReference type="Proteomes" id="UP000000589">
    <property type="component" value="Chromosome 8"/>
</dbReference>
<dbReference type="RNAct" id="Q8CIL4">
    <property type="molecule type" value="protein"/>
</dbReference>
<dbReference type="Bgee" id="ENSMUSG00000031984">
    <property type="expression patterns" value="Expressed in ear vesicle and 250 other cell types or tissues"/>
</dbReference>
<dbReference type="GO" id="GO:0005694">
    <property type="term" value="C:chromosome"/>
    <property type="evidence" value="ECO:0000250"/>
    <property type="project" value="UniProtKB"/>
</dbReference>
<dbReference type="GO" id="GO:0005730">
    <property type="term" value="C:nucleolus"/>
    <property type="evidence" value="ECO:0007669"/>
    <property type="project" value="UniProtKB-SubCell"/>
</dbReference>
<dbReference type="GO" id="GO:0032040">
    <property type="term" value="C:small-subunit processome"/>
    <property type="evidence" value="ECO:0000250"/>
    <property type="project" value="UniProtKB"/>
</dbReference>
<dbReference type="GO" id="GO:0042274">
    <property type="term" value="P:ribosomal small subunit biogenesis"/>
    <property type="evidence" value="ECO:0000250"/>
    <property type="project" value="UniProtKB"/>
</dbReference>
<dbReference type="InterPro" id="IPR027973">
    <property type="entry name" value="FSAF1-like"/>
</dbReference>
<dbReference type="InterPro" id="IPR052852">
    <property type="entry name" value="SSU_Processome_Comp"/>
</dbReference>
<dbReference type="PANTHER" id="PTHR28366">
    <property type="entry name" value="CHROMOSOME 1 OPEN READING FRAME 131"/>
    <property type="match status" value="1"/>
</dbReference>
<dbReference type="PANTHER" id="PTHR28366:SF1">
    <property type="entry name" value="CHROMOSOME 1 OPEN READING FRAME 131"/>
    <property type="match status" value="1"/>
</dbReference>
<dbReference type="Pfam" id="PF15375">
    <property type="entry name" value="FSAF1"/>
    <property type="match status" value="1"/>
</dbReference>
<protein>
    <recommendedName>
        <fullName evidence="1">40S small subunit processome assembly factor 1</fullName>
    </recommendedName>
</protein>
<gene>
    <name evidence="1" type="primary">Fsaf1</name>
</gene>
<comment type="function">
    <text evidence="1">Part of the small subunit (SSU) processome, first precursor of the small eukaryotic ribosomal subunit. During the assembly of the SSU processome in the nucleolus, many ribosome biogenesis factors, an RNA chaperone and ribosomal proteins associate with the nascent pre-rRNA and work in concert to generate RNA folding, modifications, rearrangements and cleavage as well as targeted degradation of pre-ribosomal RNA by the RNA exosome. Prevents helicase DHX37 to be recruited before post-A1 state.</text>
</comment>
<comment type="subunit">
    <text evidence="1">Part of the small subunit (SSU) processome, composed of more than 70 proteins and the RNA chaperone small nucleolar RNA (snoRNA) U3.</text>
</comment>
<comment type="subcellular location">
    <subcellularLocation>
        <location evidence="1">Chromosome</location>
    </subcellularLocation>
    <subcellularLocation>
        <location evidence="1">Nucleus</location>
        <location evidence="1">Nucleolus</location>
    </subcellularLocation>
</comment>
<reference key="1">
    <citation type="journal article" date="2005" name="Science">
        <title>The transcriptional landscape of the mammalian genome.</title>
        <authorList>
            <person name="Carninci P."/>
            <person name="Kasukawa T."/>
            <person name="Katayama S."/>
            <person name="Gough J."/>
            <person name="Frith M.C."/>
            <person name="Maeda N."/>
            <person name="Oyama R."/>
            <person name="Ravasi T."/>
            <person name="Lenhard B."/>
            <person name="Wells C."/>
            <person name="Kodzius R."/>
            <person name="Shimokawa K."/>
            <person name="Bajic V.B."/>
            <person name="Brenner S.E."/>
            <person name="Batalov S."/>
            <person name="Forrest A.R."/>
            <person name="Zavolan M."/>
            <person name="Davis M.J."/>
            <person name="Wilming L.G."/>
            <person name="Aidinis V."/>
            <person name="Allen J.E."/>
            <person name="Ambesi-Impiombato A."/>
            <person name="Apweiler R."/>
            <person name="Aturaliya R.N."/>
            <person name="Bailey T.L."/>
            <person name="Bansal M."/>
            <person name="Baxter L."/>
            <person name="Beisel K.W."/>
            <person name="Bersano T."/>
            <person name="Bono H."/>
            <person name="Chalk A.M."/>
            <person name="Chiu K.P."/>
            <person name="Choudhary V."/>
            <person name="Christoffels A."/>
            <person name="Clutterbuck D.R."/>
            <person name="Crowe M.L."/>
            <person name="Dalla E."/>
            <person name="Dalrymple B.P."/>
            <person name="de Bono B."/>
            <person name="Della Gatta G."/>
            <person name="di Bernardo D."/>
            <person name="Down T."/>
            <person name="Engstrom P."/>
            <person name="Fagiolini M."/>
            <person name="Faulkner G."/>
            <person name="Fletcher C.F."/>
            <person name="Fukushima T."/>
            <person name="Furuno M."/>
            <person name="Futaki S."/>
            <person name="Gariboldi M."/>
            <person name="Georgii-Hemming P."/>
            <person name="Gingeras T.R."/>
            <person name="Gojobori T."/>
            <person name="Green R.E."/>
            <person name="Gustincich S."/>
            <person name="Harbers M."/>
            <person name="Hayashi Y."/>
            <person name="Hensch T.K."/>
            <person name="Hirokawa N."/>
            <person name="Hill D."/>
            <person name="Huminiecki L."/>
            <person name="Iacono M."/>
            <person name="Ikeo K."/>
            <person name="Iwama A."/>
            <person name="Ishikawa T."/>
            <person name="Jakt M."/>
            <person name="Kanapin A."/>
            <person name="Katoh M."/>
            <person name="Kawasawa Y."/>
            <person name="Kelso J."/>
            <person name="Kitamura H."/>
            <person name="Kitano H."/>
            <person name="Kollias G."/>
            <person name="Krishnan S.P."/>
            <person name="Kruger A."/>
            <person name="Kummerfeld S.K."/>
            <person name="Kurochkin I.V."/>
            <person name="Lareau L.F."/>
            <person name="Lazarevic D."/>
            <person name="Lipovich L."/>
            <person name="Liu J."/>
            <person name="Liuni S."/>
            <person name="McWilliam S."/>
            <person name="Madan Babu M."/>
            <person name="Madera M."/>
            <person name="Marchionni L."/>
            <person name="Matsuda H."/>
            <person name="Matsuzawa S."/>
            <person name="Miki H."/>
            <person name="Mignone F."/>
            <person name="Miyake S."/>
            <person name="Morris K."/>
            <person name="Mottagui-Tabar S."/>
            <person name="Mulder N."/>
            <person name="Nakano N."/>
            <person name="Nakauchi H."/>
            <person name="Ng P."/>
            <person name="Nilsson R."/>
            <person name="Nishiguchi S."/>
            <person name="Nishikawa S."/>
            <person name="Nori F."/>
            <person name="Ohara O."/>
            <person name="Okazaki Y."/>
            <person name="Orlando V."/>
            <person name="Pang K.C."/>
            <person name="Pavan W.J."/>
            <person name="Pavesi G."/>
            <person name="Pesole G."/>
            <person name="Petrovsky N."/>
            <person name="Piazza S."/>
            <person name="Reed J."/>
            <person name="Reid J.F."/>
            <person name="Ring B.Z."/>
            <person name="Ringwald M."/>
            <person name="Rost B."/>
            <person name="Ruan Y."/>
            <person name="Salzberg S.L."/>
            <person name="Sandelin A."/>
            <person name="Schneider C."/>
            <person name="Schoenbach C."/>
            <person name="Sekiguchi K."/>
            <person name="Semple C.A."/>
            <person name="Seno S."/>
            <person name="Sessa L."/>
            <person name="Sheng Y."/>
            <person name="Shibata Y."/>
            <person name="Shimada H."/>
            <person name="Shimada K."/>
            <person name="Silva D."/>
            <person name="Sinclair B."/>
            <person name="Sperling S."/>
            <person name="Stupka E."/>
            <person name="Sugiura K."/>
            <person name="Sultana R."/>
            <person name="Takenaka Y."/>
            <person name="Taki K."/>
            <person name="Tammoja K."/>
            <person name="Tan S.L."/>
            <person name="Tang S."/>
            <person name="Taylor M.S."/>
            <person name="Tegner J."/>
            <person name="Teichmann S.A."/>
            <person name="Ueda H.R."/>
            <person name="van Nimwegen E."/>
            <person name="Verardo R."/>
            <person name="Wei C.L."/>
            <person name="Yagi K."/>
            <person name="Yamanishi H."/>
            <person name="Zabarovsky E."/>
            <person name="Zhu S."/>
            <person name="Zimmer A."/>
            <person name="Hide W."/>
            <person name="Bult C."/>
            <person name="Grimmond S.M."/>
            <person name="Teasdale R.D."/>
            <person name="Liu E.T."/>
            <person name="Brusic V."/>
            <person name="Quackenbush J."/>
            <person name="Wahlestedt C."/>
            <person name="Mattick J.S."/>
            <person name="Hume D.A."/>
            <person name="Kai C."/>
            <person name="Sasaki D."/>
            <person name="Tomaru Y."/>
            <person name="Fukuda S."/>
            <person name="Kanamori-Katayama M."/>
            <person name="Suzuki M."/>
            <person name="Aoki J."/>
            <person name="Arakawa T."/>
            <person name="Iida J."/>
            <person name="Imamura K."/>
            <person name="Itoh M."/>
            <person name="Kato T."/>
            <person name="Kawaji H."/>
            <person name="Kawagashira N."/>
            <person name="Kawashima T."/>
            <person name="Kojima M."/>
            <person name="Kondo S."/>
            <person name="Konno H."/>
            <person name="Nakano K."/>
            <person name="Ninomiya N."/>
            <person name="Nishio T."/>
            <person name="Okada M."/>
            <person name="Plessy C."/>
            <person name="Shibata K."/>
            <person name="Shiraki T."/>
            <person name="Suzuki S."/>
            <person name="Tagami M."/>
            <person name="Waki K."/>
            <person name="Watahiki A."/>
            <person name="Okamura-Oho Y."/>
            <person name="Suzuki H."/>
            <person name="Kawai J."/>
            <person name="Hayashizaki Y."/>
        </authorList>
    </citation>
    <scope>NUCLEOTIDE SEQUENCE [LARGE SCALE MRNA]</scope>
    <source>
        <strain>C57BL/6J</strain>
        <tissue>Kidney</tissue>
    </source>
</reference>
<reference key="2">
    <citation type="journal article" date="2004" name="Genome Res.">
        <title>The status, quality, and expansion of the NIH full-length cDNA project: the Mammalian Gene Collection (MGC).</title>
        <authorList>
            <consortium name="The MGC Project Team"/>
        </authorList>
    </citation>
    <scope>NUCLEOTIDE SEQUENCE [LARGE SCALE MRNA]</scope>
    <source>
        <strain>FVB/N</strain>
        <tissue>Mammary tumor</tissue>
    </source>
</reference>
<reference key="3">
    <citation type="journal article" date="2010" name="Cell">
        <title>A tissue-specific atlas of mouse protein phosphorylation and expression.</title>
        <authorList>
            <person name="Huttlin E.L."/>
            <person name="Jedrychowski M.P."/>
            <person name="Elias J.E."/>
            <person name="Goswami T."/>
            <person name="Rad R."/>
            <person name="Beausoleil S.A."/>
            <person name="Villen J."/>
            <person name="Haas W."/>
            <person name="Sowa M.E."/>
            <person name="Gygi S.P."/>
        </authorList>
    </citation>
    <scope>PHOSPHORYLATION [LARGE SCALE ANALYSIS] AT SER-67</scope>
    <scope>IDENTIFICATION BY MASS SPECTROMETRY [LARGE SCALE ANALYSIS]</scope>
    <source>
        <tissue>Pancreas</tissue>
        <tissue>Spleen</tissue>
    </source>
</reference>
<sequence>MAAEHDSDSVEPPGSEALLDAVLRTLYDLGETEGETEQKRIRKKKAKKRDSETIEDVAVEPLPLPGSPVRGQKKSASSFFQKLREELQSAPAAPSEVPVTTAVSLSPPKNGSKLVEVVEFQSKSKKRKLKSDEDEPAKNKTKVVKKDVDIQEFNLEKARLEVHRFGITGYGKGKERVLERERAIMLGAKPPKNTYVNYKVLQKQIKEKKIAVEEEKRAARETDIFKKKKKKGRGQEDRRSKKSAPSILSSGQVGQVGKFRNGTLILSPTDIKKINSSRVAK</sequence>